<protein>
    <recommendedName>
        <fullName>Putative cyclin-B3-1</fullName>
    </recommendedName>
    <alternativeName>
        <fullName>G2/mitotic-specific cyclin-B3-1</fullName>
        <shortName>CycB3;1</shortName>
    </alternativeName>
</protein>
<name>CCB31_ARATH</name>
<accession>Q9SA32</accession>
<accession>F4I2W2</accession>
<reference key="1">
    <citation type="journal article" date="2000" name="Nature">
        <title>Sequence and analysis of chromosome 1 of the plant Arabidopsis thaliana.</title>
        <authorList>
            <person name="Theologis A."/>
            <person name="Ecker J.R."/>
            <person name="Palm C.J."/>
            <person name="Federspiel N.A."/>
            <person name="Kaul S."/>
            <person name="White O."/>
            <person name="Alonso J."/>
            <person name="Altafi H."/>
            <person name="Araujo R."/>
            <person name="Bowman C.L."/>
            <person name="Brooks S.Y."/>
            <person name="Buehler E."/>
            <person name="Chan A."/>
            <person name="Chao Q."/>
            <person name="Chen H."/>
            <person name="Cheuk R.F."/>
            <person name="Chin C.W."/>
            <person name="Chung M.K."/>
            <person name="Conn L."/>
            <person name="Conway A.B."/>
            <person name="Conway A.R."/>
            <person name="Creasy T.H."/>
            <person name="Dewar K."/>
            <person name="Dunn P."/>
            <person name="Etgu P."/>
            <person name="Feldblyum T.V."/>
            <person name="Feng J.-D."/>
            <person name="Fong B."/>
            <person name="Fujii C.Y."/>
            <person name="Gill J.E."/>
            <person name="Goldsmith A.D."/>
            <person name="Haas B."/>
            <person name="Hansen N.F."/>
            <person name="Hughes B."/>
            <person name="Huizar L."/>
            <person name="Hunter J.L."/>
            <person name="Jenkins J."/>
            <person name="Johnson-Hopson C."/>
            <person name="Khan S."/>
            <person name="Khaykin E."/>
            <person name="Kim C.J."/>
            <person name="Koo H.L."/>
            <person name="Kremenetskaia I."/>
            <person name="Kurtz D.B."/>
            <person name="Kwan A."/>
            <person name="Lam B."/>
            <person name="Langin-Hooper S."/>
            <person name="Lee A."/>
            <person name="Lee J.M."/>
            <person name="Lenz C.A."/>
            <person name="Li J.H."/>
            <person name="Li Y.-P."/>
            <person name="Lin X."/>
            <person name="Liu S.X."/>
            <person name="Liu Z.A."/>
            <person name="Luros J.S."/>
            <person name="Maiti R."/>
            <person name="Marziali A."/>
            <person name="Militscher J."/>
            <person name="Miranda M."/>
            <person name="Nguyen M."/>
            <person name="Nierman W.C."/>
            <person name="Osborne B.I."/>
            <person name="Pai G."/>
            <person name="Peterson J."/>
            <person name="Pham P.K."/>
            <person name="Rizzo M."/>
            <person name="Rooney T."/>
            <person name="Rowley D."/>
            <person name="Sakano H."/>
            <person name="Salzberg S.L."/>
            <person name="Schwartz J.R."/>
            <person name="Shinn P."/>
            <person name="Southwick A.M."/>
            <person name="Sun H."/>
            <person name="Tallon L.J."/>
            <person name="Tambunga G."/>
            <person name="Toriumi M.J."/>
            <person name="Town C.D."/>
            <person name="Utterback T."/>
            <person name="Van Aken S."/>
            <person name="Vaysberg M."/>
            <person name="Vysotskaia V.S."/>
            <person name="Walker M."/>
            <person name="Wu D."/>
            <person name="Yu G."/>
            <person name="Fraser C.M."/>
            <person name="Venter J.C."/>
            <person name="Davis R.W."/>
        </authorList>
    </citation>
    <scope>NUCLEOTIDE SEQUENCE [LARGE SCALE GENOMIC DNA]</scope>
    <source>
        <strain>cv. Columbia</strain>
    </source>
</reference>
<reference key="2">
    <citation type="journal article" date="2017" name="Plant J.">
        <title>Araport11: a complete reannotation of the Arabidopsis thaliana reference genome.</title>
        <authorList>
            <person name="Cheng C.Y."/>
            <person name="Krishnakumar V."/>
            <person name="Chan A.P."/>
            <person name="Thibaud-Nissen F."/>
            <person name="Schobel S."/>
            <person name="Town C.D."/>
        </authorList>
    </citation>
    <scope>GENOME REANNOTATION</scope>
    <source>
        <strain>cv. Columbia</strain>
    </source>
</reference>
<reference key="3">
    <citation type="journal article" date="2004" name="Plant Physiol.">
        <title>Genome-wide analysis of the cyclin family in Arabidopsis and comparative phylogenetic analysis of plant cyclin-like proteins.</title>
        <authorList>
            <person name="Wang G."/>
            <person name="Kong H."/>
            <person name="Sun Y."/>
            <person name="Zhang X."/>
            <person name="Zhang W."/>
            <person name="Altman N."/>
            <person name="dePamphilis C.W."/>
            <person name="Ma H."/>
        </authorList>
    </citation>
    <scope>GENE FAMILY</scope>
    <scope>NOMENCLATURE</scope>
</reference>
<gene>
    <name type="primary">CYCB3-1</name>
    <name type="ordered locus">At1g16330</name>
    <name type="ORF">F3O9.13</name>
</gene>
<sequence>MLRDGNKQSKNNVRFVRKSIKTTVKTSLQNRSSLKKPPVGRSKSRSISSIPSSAVASTLSLPEKVETKCLEEDTQGESSSSGNKDPTTKVLDVTAKPKSKRRKSFTSLLVNGSKFDEKNGETTEPEKLPSIDDESNQLEVAEYVDDIYQFYWTAEALNPALGHYLSAHAEVSPVTRGILINWLIEVHFKFDLMHETLYLTMDLLDRYLSQVPIHKNEMQLIGLTALLLASKYEDYWHPRIKDLISISAESYTREQILGMERSMLKQLKFRLNAPTPYVFMLRFLKAAQSNKKLEQLAFYLIELCLVEYEALKYKPSLLCASAIYVARCTLHMTPVWTSLLNNHTHYNVSQMKDCSDMILRFHKAAKTGNLRVTYEKYINPDRSNVAVLKPLDKLPL</sequence>
<organism>
    <name type="scientific">Arabidopsis thaliana</name>
    <name type="common">Mouse-ear cress</name>
    <dbReference type="NCBI Taxonomy" id="3702"/>
    <lineage>
        <taxon>Eukaryota</taxon>
        <taxon>Viridiplantae</taxon>
        <taxon>Streptophyta</taxon>
        <taxon>Embryophyta</taxon>
        <taxon>Tracheophyta</taxon>
        <taxon>Spermatophyta</taxon>
        <taxon>Magnoliopsida</taxon>
        <taxon>eudicotyledons</taxon>
        <taxon>Gunneridae</taxon>
        <taxon>Pentapetalae</taxon>
        <taxon>rosids</taxon>
        <taxon>malvids</taxon>
        <taxon>Brassicales</taxon>
        <taxon>Brassicaceae</taxon>
        <taxon>Camelineae</taxon>
        <taxon>Arabidopsis</taxon>
    </lineage>
</organism>
<comment type="similarity">
    <text evidence="2">Belongs to the cyclin family. Cyclin AB subfamily.</text>
</comment>
<comment type="sequence caution" evidence="2">
    <conflict type="erroneous gene model prediction">
        <sequence resource="EMBL-CDS" id="AAD34686"/>
    </conflict>
</comment>
<comment type="sequence caution" evidence="2">
    <conflict type="erroneous gene model prediction">
        <sequence resource="EMBL-CDS" id="AEE29436"/>
    </conflict>
</comment>
<proteinExistence type="inferred from homology"/>
<feature type="chain" id="PRO_0000287017" description="Putative cyclin-B3-1">
    <location>
        <begin position="1"/>
        <end position="396"/>
    </location>
</feature>
<feature type="region of interest" description="Disordered" evidence="1">
    <location>
        <begin position="1"/>
        <end position="98"/>
    </location>
</feature>
<feature type="compositionally biased region" description="Polar residues" evidence="1">
    <location>
        <begin position="21"/>
        <end position="32"/>
    </location>
</feature>
<feature type="compositionally biased region" description="Low complexity" evidence="1">
    <location>
        <begin position="39"/>
        <end position="57"/>
    </location>
</feature>
<feature type="compositionally biased region" description="Polar residues" evidence="1">
    <location>
        <begin position="76"/>
        <end position="85"/>
    </location>
</feature>
<evidence type="ECO:0000256" key="1">
    <source>
        <dbReference type="SAM" id="MobiDB-lite"/>
    </source>
</evidence>
<evidence type="ECO:0000305" key="2"/>
<keyword id="KW-0131">Cell cycle</keyword>
<keyword id="KW-0132">Cell division</keyword>
<keyword id="KW-0195">Cyclin</keyword>
<keyword id="KW-1185">Reference proteome</keyword>
<dbReference type="EMBL" id="AC006341">
    <property type="protein sequence ID" value="AAD34686.1"/>
    <property type="status" value="ALT_SEQ"/>
    <property type="molecule type" value="Genomic_DNA"/>
</dbReference>
<dbReference type="EMBL" id="CP002684">
    <property type="protein sequence ID" value="AEE29436.1"/>
    <property type="status" value="ALT_SEQ"/>
    <property type="molecule type" value="Genomic_DNA"/>
</dbReference>
<dbReference type="PIR" id="D86298">
    <property type="entry name" value="D86298"/>
</dbReference>
<dbReference type="RefSeq" id="NP_173083.3">
    <property type="nucleotide sequence ID" value="NM_101499.4"/>
</dbReference>
<dbReference type="SMR" id="Q9SA32"/>
<dbReference type="BioGRID" id="23442">
    <property type="interactions" value="10"/>
</dbReference>
<dbReference type="FunCoup" id="Q9SA32">
    <property type="interactions" value="908"/>
</dbReference>
<dbReference type="IntAct" id="Q9SA32">
    <property type="interactions" value="3"/>
</dbReference>
<dbReference type="STRING" id="3702.Q9SA32"/>
<dbReference type="PaxDb" id="3702-AT1G16330.1"/>
<dbReference type="PeptideAtlas" id="Q9SA32"/>
<dbReference type="ProteomicsDB" id="223931"/>
<dbReference type="GeneID" id="838202"/>
<dbReference type="KEGG" id="ath:AT1G16330"/>
<dbReference type="Araport" id="AT1G16330"/>
<dbReference type="TAIR" id="AT1G16330">
    <property type="gene designation" value="CYCB3"/>
</dbReference>
<dbReference type="eggNOG" id="KOG0653">
    <property type="taxonomic scope" value="Eukaryota"/>
</dbReference>
<dbReference type="HOGENOM" id="CLU_020695_0_2_1"/>
<dbReference type="InParanoid" id="Q9SA32"/>
<dbReference type="OrthoDB" id="5590282at2759"/>
<dbReference type="PhylomeDB" id="Q9SA32"/>
<dbReference type="PRO" id="PR:Q9SA32"/>
<dbReference type="Proteomes" id="UP000006548">
    <property type="component" value="Chromosome 1"/>
</dbReference>
<dbReference type="ExpressionAtlas" id="Q9SA32">
    <property type="expression patterns" value="baseline and differential"/>
</dbReference>
<dbReference type="GO" id="GO:0000307">
    <property type="term" value="C:cyclin-dependent protein kinase holoenzyme complex"/>
    <property type="evidence" value="ECO:0000318"/>
    <property type="project" value="GO_Central"/>
</dbReference>
<dbReference type="GO" id="GO:0005737">
    <property type="term" value="C:cytoplasm"/>
    <property type="evidence" value="ECO:0000318"/>
    <property type="project" value="GO_Central"/>
</dbReference>
<dbReference type="GO" id="GO:0005634">
    <property type="term" value="C:nucleus"/>
    <property type="evidence" value="ECO:0000318"/>
    <property type="project" value="GO_Central"/>
</dbReference>
<dbReference type="GO" id="GO:0016538">
    <property type="term" value="F:cyclin-dependent protein serine/threonine kinase regulator activity"/>
    <property type="evidence" value="ECO:0000318"/>
    <property type="project" value="GO_Central"/>
</dbReference>
<dbReference type="GO" id="GO:0051301">
    <property type="term" value="P:cell division"/>
    <property type="evidence" value="ECO:0007669"/>
    <property type="project" value="UniProtKB-KW"/>
</dbReference>
<dbReference type="GO" id="GO:0000082">
    <property type="term" value="P:G1/S transition of mitotic cell cycle"/>
    <property type="evidence" value="ECO:0000318"/>
    <property type="project" value="GO_Central"/>
</dbReference>
<dbReference type="CDD" id="cd20511">
    <property type="entry name" value="CYCLIN_AtCycB-like_rpt2"/>
    <property type="match status" value="1"/>
</dbReference>
<dbReference type="CDD" id="cd20507">
    <property type="entry name" value="CYCLIN_CCNB1-like_rpt1"/>
    <property type="match status" value="1"/>
</dbReference>
<dbReference type="FunFam" id="1.10.472.10:FF:000057">
    <property type="entry name" value="Cyclin N-terminal domain containing 2"/>
    <property type="match status" value="1"/>
</dbReference>
<dbReference type="FunFam" id="1.10.472.10:FF:000091">
    <property type="entry name" value="putative cyclin-B3-1 isoform X3"/>
    <property type="match status" value="1"/>
</dbReference>
<dbReference type="Gene3D" id="1.10.472.10">
    <property type="entry name" value="Cyclin-like"/>
    <property type="match status" value="2"/>
</dbReference>
<dbReference type="InterPro" id="IPR039361">
    <property type="entry name" value="Cyclin"/>
</dbReference>
<dbReference type="InterPro" id="IPR013763">
    <property type="entry name" value="Cyclin-like_dom"/>
</dbReference>
<dbReference type="InterPro" id="IPR036915">
    <property type="entry name" value="Cyclin-like_sf"/>
</dbReference>
<dbReference type="InterPro" id="IPR046965">
    <property type="entry name" value="Cyclin_A/B-like"/>
</dbReference>
<dbReference type="InterPro" id="IPR004367">
    <property type="entry name" value="Cyclin_C-dom"/>
</dbReference>
<dbReference type="InterPro" id="IPR006671">
    <property type="entry name" value="Cyclin_N"/>
</dbReference>
<dbReference type="InterPro" id="IPR048258">
    <property type="entry name" value="Cyclins_cyclin-box"/>
</dbReference>
<dbReference type="PANTHER" id="PTHR10177">
    <property type="entry name" value="CYCLINS"/>
    <property type="match status" value="1"/>
</dbReference>
<dbReference type="Pfam" id="PF02984">
    <property type="entry name" value="Cyclin_C"/>
    <property type="match status" value="1"/>
</dbReference>
<dbReference type="Pfam" id="PF00134">
    <property type="entry name" value="Cyclin_N"/>
    <property type="match status" value="1"/>
</dbReference>
<dbReference type="PIRSF" id="PIRSF001771">
    <property type="entry name" value="Cyclin_A_B_D_E"/>
    <property type="match status" value="1"/>
</dbReference>
<dbReference type="SMART" id="SM00385">
    <property type="entry name" value="CYCLIN"/>
    <property type="match status" value="2"/>
</dbReference>
<dbReference type="SMART" id="SM01332">
    <property type="entry name" value="Cyclin_C"/>
    <property type="match status" value="1"/>
</dbReference>
<dbReference type="SUPFAM" id="SSF47954">
    <property type="entry name" value="Cyclin-like"/>
    <property type="match status" value="2"/>
</dbReference>
<dbReference type="PROSITE" id="PS00292">
    <property type="entry name" value="CYCLINS"/>
    <property type="match status" value="1"/>
</dbReference>